<keyword id="KW-0687">Ribonucleoprotein</keyword>
<keyword id="KW-0689">Ribosomal protein</keyword>
<keyword id="KW-0694">RNA-binding</keyword>
<keyword id="KW-0699">rRNA-binding</keyword>
<comment type="function">
    <text evidence="1">Forms part of the ribosomal stalk, playing a central role in the interaction of the ribosome with GTP-bound translation factors.</text>
</comment>
<comment type="subunit">
    <text evidence="1">Part of the ribosomal stalk of the 50S ribosomal subunit. The N-terminus interacts with L11 and the large rRNA to form the base of the stalk. The C-terminus forms an elongated spine to which L12 dimers bind in a sequential fashion forming a multimeric L10(L12)X complex (By similarity).</text>
</comment>
<comment type="similarity">
    <text evidence="2">Belongs to the universal ribosomal protein uL10 family.</text>
</comment>
<feature type="chain" id="PRO_0000154656" description="Large ribosomal subunit protein uL10">
    <location>
        <begin position="1"/>
        <end position="172"/>
    </location>
</feature>
<dbReference type="EMBL" id="M94319">
    <property type="protein sequence ID" value="AAA23107.1"/>
    <property type="molecule type" value="Genomic_DNA"/>
</dbReference>
<dbReference type="RefSeq" id="WP_012778365.1">
    <property type="nucleotide sequence ID" value="NZ_WOXD02000001.1"/>
</dbReference>
<dbReference type="SMR" id="P36249"/>
<dbReference type="GeneID" id="93076389"/>
<dbReference type="OMA" id="VRDQKQA"/>
<dbReference type="GO" id="GO:0015934">
    <property type="term" value="C:large ribosomal subunit"/>
    <property type="evidence" value="ECO:0007669"/>
    <property type="project" value="InterPro"/>
</dbReference>
<dbReference type="GO" id="GO:0070180">
    <property type="term" value="F:large ribosomal subunit rRNA binding"/>
    <property type="evidence" value="ECO:0007669"/>
    <property type="project" value="UniProtKB-UniRule"/>
</dbReference>
<dbReference type="GO" id="GO:0003735">
    <property type="term" value="F:structural constituent of ribosome"/>
    <property type="evidence" value="ECO:0007669"/>
    <property type="project" value="InterPro"/>
</dbReference>
<dbReference type="GO" id="GO:0006412">
    <property type="term" value="P:translation"/>
    <property type="evidence" value="ECO:0007669"/>
    <property type="project" value="UniProtKB-UniRule"/>
</dbReference>
<dbReference type="CDD" id="cd05797">
    <property type="entry name" value="Ribosomal_L10"/>
    <property type="match status" value="1"/>
</dbReference>
<dbReference type="Gene3D" id="3.30.70.1730">
    <property type="match status" value="1"/>
</dbReference>
<dbReference type="HAMAP" id="MF_00362">
    <property type="entry name" value="Ribosomal_uL10"/>
    <property type="match status" value="1"/>
</dbReference>
<dbReference type="InterPro" id="IPR001790">
    <property type="entry name" value="Ribosomal_uL10"/>
</dbReference>
<dbReference type="InterPro" id="IPR043141">
    <property type="entry name" value="Ribosomal_uL10-like_sf"/>
</dbReference>
<dbReference type="InterPro" id="IPR022973">
    <property type="entry name" value="Ribosomal_uL10_bac"/>
</dbReference>
<dbReference type="InterPro" id="IPR047865">
    <property type="entry name" value="Ribosomal_uL10_bac_type"/>
</dbReference>
<dbReference type="InterPro" id="IPR002363">
    <property type="entry name" value="Ribosomal_uL10_CS_bac"/>
</dbReference>
<dbReference type="NCBIfam" id="NF000955">
    <property type="entry name" value="PRK00099.1-1"/>
    <property type="match status" value="1"/>
</dbReference>
<dbReference type="PANTHER" id="PTHR11560">
    <property type="entry name" value="39S RIBOSOMAL PROTEIN L10, MITOCHONDRIAL"/>
    <property type="match status" value="1"/>
</dbReference>
<dbReference type="Pfam" id="PF00466">
    <property type="entry name" value="Ribosomal_L10"/>
    <property type="match status" value="1"/>
</dbReference>
<dbReference type="SUPFAM" id="SSF160369">
    <property type="entry name" value="Ribosomal protein L10-like"/>
    <property type="match status" value="1"/>
</dbReference>
<dbReference type="PROSITE" id="PS01109">
    <property type="entry name" value="RIBOSOMAL_L10"/>
    <property type="match status" value="1"/>
</dbReference>
<name>RL10_LIBAS</name>
<sequence>MNRQGKSVEISELSKIFSSSGSIVVAHYKGISVAQIKDLRKKMREAGGGVKVAKNRLVKIAIRDTSIRGISDLFVGQSLIVYSDSPVIAPKISVSFSNDNNEFRVLGGVVEKGVLNQDSIKQIASLPDLEGIRAGIISAIQSNATRLVRLLGTPQTQVVRAISAFVDKNQQG</sequence>
<gene>
    <name type="primary">rplJ</name>
</gene>
<accession>P36249</accession>
<organism>
    <name type="scientific">Liberibacter asiaticus</name>
    <name type="common">Citrus greening disease</name>
    <name type="synonym">Liberobacter asiaticum</name>
    <dbReference type="NCBI Taxonomy" id="34021"/>
    <lineage>
        <taxon>Bacteria</taxon>
        <taxon>Pseudomonadati</taxon>
        <taxon>Pseudomonadota</taxon>
        <taxon>Alphaproteobacteria</taxon>
        <taxon>Hyphomicrobiales</taxon>
        <taxon>Rhizobiaceae</taxon>
        <taxon>Liberibacter</taxon>
    </lineage>
</organism>
<evidence type="ECO:0000250" key="1"/>
<evidence type="ECO:0000305" key="2"/>
<reference key="1">
    <citation type="journal article" date="1993" name="Curr. Microbiol.">
        <title>The genome of the non-cultured, bacterial-like organism associated with citrus greening disease contains the nusG-rplKAJL-rpoBC gene cluster and the gene for a bacteriophage type DNA polymerase.</title>
        <authorList>
            <person name="Villechanoux S."/>
            <person name="Garnier M."/>
            <person name="Laigret F."/>
            <person name="Renaudin J."/>
            <person name="Bove J.M."/>
        </authorList>
    </citation>
    <scope>NUCLEOTIDE SEQUENCE [GENOMIC DNA]</scope>
</reference>
<protein>
    <recommendedName>
        <fullName evidence="2">Large ribosomal subunit protein uL10</fullName>
    </recommendedName>
    <alternativeName>
        <fullName>50S ribosomal protein L10</fullName>
    </alternativeName>
</protein>
<proteinExistence type="inferred from homology"/>